<feature type="chain" id="PRO_1000164569" description="Orotidine 5'-phosphate decarboxylase">
    <location>
        <begin position="1"/>
        <end position="245"/>
    </location>
</feature>
<feature type="active site" description="Proton donor" evidence="1">
    <location>
        <position position="73"/>
    </location>
</feature>
<feature type="binding site" evidence="1">
    <location>
        <position position="22"/>
    </location>
    <ligand>
        <name>substrate</name>
    </ligand>
</feature>
<feature type="binding site" evidence="1">
    <location>
        <position position="44"/>
    </location>
    <ligand>
        <name>substrate</name>
    </ligand>
</feature>
<feature type="binding site" evidence="1">
    <location>
        <begin position="71"/>
        <end position="80"/>
    </location>
    <ligand>
        <name>substrate</name>
    </ligand>
</feature>
<feature type="binding site" evidence="1">
    <location>
        <position position="131"/>
    </location>
    <ligand>
        <name>substrate</name>
    </ligand>
</feature>
<feature type="binding site" evidence="1">
    <location>
        <position position="192"/>
    </location>
    <ligand>
        <name>substrate</name>
    </ligand>
</feature>
<feature type="binding site" evidence="1">
    <location>
        <position position="201"/>
    </location>
    <ligand>
        <name>substrate</name>
    </ligand>
</feature>
<feature type="binding site" evidence="1">
    <location>
        <position position="221"/>
    </location>
    <ligand>
        <name>substrate</name>
    </ligand>
</feature>
<feature type="binding site" evidence="1">
    <location>
        <position position="222"/>
    </location>
    <ligand>
        <name>substrate</name>
    </ligand>
</feature>
<dbReference type="EC" id="4.1.1.23" evidence="1"/>
<dbReference type="EMBL" id="CU928145">
    <property type="protein sequence ID" value="CAU97300.1"/>
    <property type="molecule type" value="Genomic_DNA"/>
</dbReference>
<dbReference type="RefSeq" id="WP_000176278.1">
    <property type="nucleotide sequence ID" value="NC_011748.1"/>
</dbReference>
<dbReference type="SMR" id="B7L4B7"/>
<dbReference type="GeneID" id="93775404"/>
<dbReference type="KEGG" id="eck:EC55989_1442"/>
<dbReference type="HOGENOM" id="CLU_067069_0_0_6"/>
<dbReference type="UniPathway" id="UPA00070">
    <property type="reaction ID" value="UER00120"/>
</dbReference>
<dbReference type="Proteomes" id="UP000000746">
    <property type="component" value="Chromosome"/>
</dbReference>
<dbReference type="GO" id="GO:0005829">
    <property type="term" value="C:cytosol"/>
    <property type="evidence" value="ECO:0007669"/>
    <property type="project" value="TreeGrafter"/>
</dbReference>
<dbReference type="GO" id="GO:0004590">
    <property type="term" value="F:orotidine-5'-phosphate decarboxylase activity"/>
    <property type="evidence" value="ECO:0007669"/>
    <property type="project" value="UniProtKB-UniRule"/>
</dbReference>
<dbReference type="GO" id="GO:0006207">
    <property type="term" value="P:'de novo' pyrimidine nucleobase biosynthetic process"/>
    <property type="evidence" value="ECO:0007669"/>
    <property type="project" value="InterPro"/>
</dbReference>
<dbReference type="GO" id="GO:0044205">
    <property type="term" value="P:'de novo' UMP biosynthetic process"/>
    <property type="evidence" value="ECO:0007669"/>
    <property type="project" value="UniProtKB-UniRule"/>
</dbReference>
<dbReference type="CDD" id="cd04725">
    <property type="entry name" value="OMP_decarboxylase_like"/>
    <property type="match status" value="1"/>
</dbReference>
<dbReference type="FunFam" id="3.20.20.70:FF:000015">
    <property type="entry name" value="Orotidine 5'-phosphate decarboxylase"/>
    <property type="match status" value="1"/>
</dbReference>
<dbReference type="Gene3D" id="3.20.20.70">
    <property type="entry name" value="Aldolase class I"/>
    <property type="match status" value="1"/>
</dbReference>
<dbReference type="HAMAP" id="MF_01200_B">
    <property type="entry name" value="OMPdecase_type1_B"/>
    <property type="match status" value="1"/>
</dbReference>
<dbReference type="InterPro" id="IPR013785">
    <property type="entry name" value="Aldolase_TIM"/>
</dbReference>
<dbReference type="InterPro" id="IPR014732">
    <property type="entry name" value="OMPdecase"/>
</dbReference>
<dbReference type="InterPro" id="IPR018089">
    <property type="entry name" value="OMPdecase_AS"/>
</dbReference>
<dbReference type="InterPro" id="IPR047596">
    <property type="entry name" value="OMPdecase_bac"/>
</dbReference>
<dbReference type="InterPro" id="IPR001754">
    <property type="entry name" value="OMPdeCOase_dom"/>
</dbReference>
<dbReference type="InterPro" id="IPR011060">
    <property type="entry name" value="RibuloseP-bd_barrel"/>
</dbReference>
<dbReference type="NCBIfam" id="NF001273">
    <property type="entry name" value="PRK00230.1"/>
    <property type="match status" value="1"/>
</dbReference>
<dbReference type="NCBIfam" id="TIGR01740">
    <property type="entry name" value="pyrF"/>
    <property type="match status" value="1"/>
</dbReference>
<dbReference type="PANTHER" id="PTHR32119">
    <property type="entry name" value="OROTIDINE 5'-PHOSPHATE DECARBOXYLASE"/>
    <property type="match status" value="1"/>
</dbReference>
<dbReference type="PANTHER" id="PTHR32119:SF2">
    <property type="entry name" value="OROTIDINE 5'-PHOSPHATE DECARBOXYLASE"/>
    <property type="match status" value="1"/>
</dbReference>
<dbReference type="Pfam" id="PF00215">
    <property type="entry name" value="OMPdecase"/>
    <property type="match status" value="1"/>
</dbReference>
<dbReference type="SMART" id="SM00934">
    <property type="entry name" value="OMPdecase"/>
    <property type="match status" value="1"/>
</dbReference>
<dbReference type="SUPFAM" id="SSF51366">
    <property type="entry name" value="Ribulose-phoshate binding barrel"/>
    <property type="match status" value="1"/>
</dbReference>
<dbReference type="PROSITE" id="PS00156">
    <property type="entry name" value="OMPDECASE"/>
    <property type="match status" value="1"/>
</dbReference>
<sequence length="245" mass="26366">MTLTASSSSRAVTNSPVVVALDYHNRDDALSFVDKIDPRDCRLKVGKEMFTLFGPQFVRELQQRGFDIFLDLKFHDIPNTAAHAVAAAADLGVWMVNVHASGGARMMTAAREALVPFGKDAPLLIAVTVLTSMEASDLVDLGMTLSPADYAERLAALTQKCGLDGVVCSAQEAVRFKQVFGQEFKLVTPGIRPQGSEAGDQRRIMTPEQALSAGVDYMVIGRPVTQSVDPAQTLKAINASLQRSA</sequence>
<protein>
    <recommendedName>
        <fullName evidence="1">Orotidine 5'-phosphate decarboxylase</fullName>
        <ecNumber evidence="1">4.1.1.23</ecNumber>
    </recommendedName>
    <alternativeName>
        <fullName evidence="1">OMP decarboxylase</fullName>
        <shortName evidence="1">OMPDCase</shortName>
        <shortName evidence="1">OMPdecase</shortName>
    </alternativeName>
</protein>
<proteinExistence type="inferred from homology"/>
<organism>
    <name type="scientific">Escherichia coli (strain 55989 / EAEC)</name>
    <dbReference type="NCBI Taxonomy" id="585055"/>
    <lineage>
        <taxon>Bacteria</taxon>
        <taxon>Pseudomonadati</taxon>
        <taxon>Pseudomonadota</taxon>
        <taxon>Gammaproteobacteria</taxon>
        <taxon>Enterobacterales</taxon>
        <taxon>Enterobacteriaceae</taxon>
        <taxon>Escherichia</taxon>
    </lineage>
</organism>
<comment type="function">
    <text evidence="1">Catalyzes the decarboxylation of orotidine 5'-monophosphate (OMP) to uridine 5'-monophosphate (UMP).</text>
</comment>
<comment type="catalytic activity">
    <reaction evidence="1">
        <text>orotidine 5'-phosphate + H(+) = UMP + CO2</text>
        <dbReference type="Rhea" id="RHEA:11596"/>
        <dbReference type="ChEBI" id="CHEBI:15378"/>
        <dbReference type="ChEBI" id="CHEBI:16526"/>
        <dbReference type="ChEBI" id="CHEBI:57538"/>
        <dbReference type="ChEBI" id="CHEBI:57865"/>
        <dbReference type="EC" id="4.1.1.23"/>
    </reaction>
</comment>
<comment type="pathway">
    <text evidence="1">Pyrimidine metabolism; UMP biosynthesis via de novo pathway; UMP from orotate: step 2/2.</text>
</comment>
<comment type="subunit">
    <text evidence="1">Homodimer.</text>
</comment>
<comment type="similarity">
    <text evidence="1">Belongs to the OMP decarboxylase family. Type 1 subfamily.</text>
</comment>
<accession>B7L4B7</accession>
<evidence type="ECO:0000255" key="1">
    <source>
        <dbReference type="HAMAP-Rule" id="MF_01200"/>
    </source>
</evidence>
<name>PYRF_ECO55</name>
<reference key="1">
    <citation type="journal article" date="2009" name="PLoS Genet.">
        <title>Organised genome dynamics in the Escherichia coli species results in highly diverse adaptive paths.</title>
        <authorList>
            <person name="Touchon M."/>
            <person name="Hoede C."/>
            <person name="Tenaillon O."/>
            <person name="Barbe V."/>
            <person name="Baeriswyl S."/>
            <person name="Bidet P."/>
            <person name="Bingen E."/>
            <person name="Bonacorsi S."/>
            <person name="Bouchier C."/>
            <person name="Bouvet O."/>
            <person name="Calteau A."/>
            <person name="Chiapello H."/>
            <person name="Clermont O."/>
            <person name="Cruveiller S."/>
            <person name="Danchin A."/>
            <person name="Diard M."/>
            <person name="Dossat C."/>
            <person name="Karoui M.E."/>
            <person name="Frapy E."/>
            <person name="Garry L."/>
            <person name="Ghigo J.M."/>
            <person name="Gilles A.M."/>
            <person name="Johnson J."/>
            <person name="Le Bouguenec C."/>
            <person name="Lescat M."/>
            <person name="Mangenot S."/>
            <person name="Martinez-Jehanne V."/>
            <person name="Matic I."/>
            <person name="Nassif X."/>
            <person name="Oztas S."/>
            <person name="Petit M.A."/>
            <person name="Pichon C."/>
            <person name="Rouy Z."/>
            <person name="Ruf C.S."/>
            <person name="Schneider D."/>
            <person name="Tourret J."/>
            <person name="Vacherie B."/>
            <person name="Vallenet D."/>
            <person name="Medigue C."/>
            <person name="Rocha E.P.C."/>
            <person name="Denamur E."/>
        </authorList>
    </citation>
    <scope>NUCLEOTIDE SEQUENCE [LARGE SCALE GENOMIC DNA]</scope>
    <source>
        <strain>55989 / EAEC</strain>
    </source>
</reference>
<gene>
    <name evidence="1" type="primary">pyrF</name>
    <name type="ordered locus">EC55989_1442</name>
</gene>
<keyword id="KW-0210">Decarboxylase</keyword>
<keyword id="KW-0456">Lyase</keyword>
<keyword id="KW-0665">Pyrimidine biosynthesis</keyword>
<keyword id="KW-1185">Reference proteome</keyword>